<organism>
    <name type="scientific">Ascaris suum</name>
    <name type="common">Pig roundworm</name>
    <name type="synonym">Ascaris lumbricoides</name>
    <dbReference type="NCBI Taxonomy" id="6253"/>
    <lineage>
        <taxon>Eukaryota</taxon>
        <taxon>Metazoa</taxon>
        <taxon>Ecdysozoa</taxon>
        <taxon>Nematoda</taxon>
        <taxon>Chromadorea</taxon>
        <taxon>Rhabditida</taxon>
        <taxon>Spirurina</taxon>
        <taxon>Ascaridomorpha</taxon>
        <taxon>Ascaridoidea</taxon>
        <taxon>Ascarididae</taxon>
        <taxon>Ascaris</taxon>
    </lineage>
</organism>
<accession>Q5H7N6</accession>
<proteinExistence type="evidence at transcript level"/>
<keyword id="KW-0044">Antibiotic</keyword>
<keyword id="KW-0929">Antimicrobial</keyword>
<keyword id="KW-0964">Secreted</keyword>
<keyword id="KW-0732">Signal</keyword>
<dbReference type="EMBL" id="AB186033">
    <property type="protein sequence ID" value="BAD89086.1"/>
    <property type="molecule type" value="mRNA"/>
</dbReference>
<dbReference type="EMBL" id="AB186037">
    <property type="protein sequence ID" value="BAD89090.1"/>
    <property type="molecule type" value="Genomic_DNA"/>
</dbReference>
<dbReference type="SMR" id="Q5H7N6"/>
<dbReference type="GO" id="GO:0005576">
    <property type="term" value="C:extracellular region"/>
    <property type="evidence" value="ECO:0000250"/>
    <property type="project" value="UniProtKB"/>
</dbReference>
<dbReference type="GO" id="GO:0019731">
    <property type="term" value="P:antibacterial humoral response"/>
    <property type="evidence" value="ECO:0007669"/>
    <property type="project" value="InterPro"/>
</dbReference>
<dbReference type="GO" id="GO:0002776">
    <property type="term" value="P:antimicrobial peptide secretion"/>
    <property type="evidence" value="ECO:0000314"/>
    <property type="project" value="UniProtKB"/>
</dbReference>
<dbReference type="GO" id="GO:0042742">
    <property type="term" value="P:defense response to bacterium"/>
    <property type="evidence" value="ECO:0000270"/>
    <property type="project" value="UniProtKB"/>
</dbReference>
<dbReference type="InterPro" id="IPR000875">
    <property type="entry name" value="Cecropin"/>
</dbReference>
<dbReference type="Pfam" id="PF00272">
    <property type="entry name" value="Cecropin"/>
    <property type="match status" value="1"/>
</dbReference>
<dbReference type="PROSITE" id="PS00268">
    <property type="entry name" value="CECROPIN"/>
    <property type="match status" value="1"/>
</dbReference>
<name>CECP2_ASCSU</name>
<comment type="function">
    <text evidence="2">Has antibacterial activity against several Gram-positive and Gram-negative bacteria. Is weakly active against yeasts. Acts by a nonpore mechanism.</text>
</comment>
<comment type="subcellular location">
    <subcellularLocation>
        <location evidence="1">Secreted</location>
    </subcellularLocation>
</comment>
<comment type="tissue specificity">
    <text evidence="2">Expressed in the body wall, intestine, uterus and ovary.</text>
</comment>
<comment type="induction">
    <text evidence="2">By bacterial infection.</text>
</comment>
<comment type="similarity">
    <text evidence="3">Belongs to the cecropin family.</text>
</comment>
<protein>
    <recommendedName>
        <fullName>Cecropin-P2</fullName>
    </recommendedName>
</protein>
<feature type="signal peptide" evidence="1">
    <location>
        <begin position="1"/>
        <end position="13"/>
    </location>
</feature>
<feature type="chain" id="PRO_0000397965" description="Cecropin-P2">
    <location>
        <begin position="14"/>
        <end position="44"/>
    </location>
</feature>
<feature type="propeptide" id="PRO_0000397966" description="Removed in mature form" evidence="1">
    <location>
        <begin position="45"/>
        <end position="74"/>
    </location>
</feature>
<gene>
    <name type="primary">ASCEC-2</name>
</gene>
<evidence type="ECO:0000250" key="1"/>
<evidence type="ECO:0000269" key="2">
    <source>
    </source>
</evidence>
<evidence type="ECO:0000305" key="3"/>
<sequence>MIFIYLLVQTAESSWLSKTYKKLENSAKKRISEGIAIAIQGGPRRRRFVVQQDTISPRLEVDERFLPNSVQEQI</sequence>
<reference key="1">
    <citation type="journal article" date="2005" name="Biochem. J.">
        <title>Cecropin P1 and novel nematode cecropins: a bacteria-inducible antimicrobial peptide family in the nematode Ascaris suum.</title>
        <authorList>
            <person name="Pillai A."/>
            <person name="Ueno S."/>
            <person name="Zhang H."/>
            <person name="Lee J.M."/>
            <person name="Kato Y."/>
        </authorList>
    </citation>
    <scope>NUCLEOTIDE SEQUENCE [GENOMIC DNA / MRNA]</scope>
    <scope>FUNCTION</scope>
    <scope>TISSUE SPECIFICITY</scope>
    <scope>INDUCTION</scope>
</reference>